<proteinExistence type="evidence at protein level"/>
<gene>
    <name evidence="8 10" type="primary">shop</name>
    <name evidence="10" type="ORF">CG7280</name>
</gene>
<accession>Q9VWP4</accession>
<comment type="function">
    <text evidence="7">Required in ensheathing glial cells for normal larval locomotion. Oxidizes sulfite which is required to maintain glutamate homeostasis and as a consequence, neuronal network function.</text>
</comment>
<comment type="catalytic activity">
    <reaction evidence="7">
        <text>sulfite + O2 + H2O = sulfate + H2O2</text>
        <dbReference type="Rhea" id="RHEA:24600"/>
        <dbReference type="ChEBI" id="CHEBI:15377"/>
        <dbReference type="ChEBI" id="CHEBI:15379"/>
        <dbReference type="ChEBI" id="CHEBI:16189"/>
        <dbReference type="ChEBI" id="CHEBI:16240"/>
        <dbReference type="ChEBI" id="CHEBI:17359"/>
        <dbReference type="EC" id="1.8.3.1"/>
    </reaction>
</comment>
<comment type="cofactor">
    <cofactor evidence="2">
        <name>heme b</name>
        <dbReference type="ChEBI" id="CHEBI:60344"/>
    </cofactor>
    <text evidence="2">Binds 1 heme b (iron(II)-protoporphyrin IX) group non-covalently per subunit.</text>
</comment>
<comment type="cofactor">
    <cofactor evidence="3">
        <name>Mo-molybdopterin</name>
        <dbReference type="ChEBI" id="CHEBI:71302"/>
    </cofactor>
    <text evidence="3">Binds 1 Mo-molybdopterin (Mo-MPT) cofactor per subunit.</text>
</comment>
<comment type="pathway">
    <text evidence="7">Energy metabolism; sulfur metabolism.</text>
</comment>
<comment type="subcellular location">
    <subcellularLocation>
        <location evidence="9">Mitochondrion intermembrane space</location>
    </subcellularLocation>
</comment>
<comment type="tissue specificity">
    <text evidence="7">Expressed in the ensheathing glia with relatively weak expression in the CNS cortex (at protein level).</text>
</comment>
<comment type="disruption phenotype">
    <text evidence="7">RNAi-mediated knockdown in larvae results in reduced levels of sulfite oxidase activity. RNAi-mediated knockdown in ensheathing glial cells results in larval locamotion defects, including reduced run phases with more stops and an increase in head bending frequency. RNAi-mediated knockdown in the cortex glia, astrocytes or neurons has no effect on locomotion or head bending frequency.</text>
</comment>
<comment type="miscellaneous">
    <text evidence="8">Named 'shopper' because of the mutant locomotion phenotype in which larvae stop and bend their heads more frequently.</text>
</comment>
<comment type="caution">
    <text evidence="9">It is not obvious if the molybdenum-pterin domain is functional; the conserved cysteine (position 339) is replaced by an isoleucine.</text>
</comment>
<evidence type="ECO:0000250" key="1"/>
<evidence type="ECO:0000250" key="2">
    <source>
        <dbReference type="UniProtKB" id="P51687"/>
    </source>
</evidence>
<evidence type="ECO:0000250" key="3">
    <source>
        <dbReference type="UniProtKB" id="Q07116"/>
    </source>
</evidence>
<evidence type="ECO:0000255" key="4"/>
<evidence type="ECO:0000255" key="5">
    <source>
        <dbReference type="PROSITE-ProRule" id="PRU00279"/>
    </source>
</evidence>
<evidence type="ECO:0000256" key="6">
    <source>
        <dbReference type="SAM" id="MobiDB-lite"/>
    </source>
</evidence>
<evidence type="ECO:0000269" key="7">
    <source>
    </source>
</evidence>
<evidence type="ECO:0000303" key="8">
    <source>
    </source>
</evidence>
<evidence type="ECO:0000305" key="9"/>
<evidence type="ECO:0000312" key="10">
    <source>
        <dbReference type="FlyBase" id="FBgn0030966"/>
    </source>
</evidence>
<feature type="transit peptide" description="Mitochondrion" evidence="4">
    <location>
        <begin position="1"/>
        <end position="34"/>
    </location>
</feature>
<feature type="chain" id="PRO_0000006485" description="Sulfite oxidase, mitochondrial" evidence="4">
    <location>
        <begin position="35"/>
        <end position="573"/>
    </location>
</feature>
<feature type="domain" description="Cytochrome b5 heme-binding" evidence="5">
    <location>
        <begin position="108"/>
        <end position="186"/>
    </location>
</feature>
<feature type="region of interest" description="Disordered" evidence="6">
    <location>
        <begin position="14"/>
        <end position="50"/>
    </location>
</feature>
<feature type="region of interest" description="Hinge" evidence="1">
    <location>
        <begin position="190"/>
        <end position="199"/>
    </location>
</feature>
<feature type="region of interest" description="Moco domain" evidence="1">
    <location>
        <begin position="200"/>
        <end position="423"/>
    </location>
</feature>
<feature type="region of interest" description="Homodimerization" evidence="1">
    <location>
        <begin position="424"/>
        <end position="567"/>
    </location>
</feature>
<feature type="compositionally biased region" description="Basic residues" evidence="6">
    <location>
        <begin position="14"/>
        <end position="26"/>
    </location>
</feature>
<feature type="binding site" description="axial binding residue" evidence="5">
    <location>
        <position position="144"/>
    </location>
    <ligand>
        <name>heme b</name>
        <dbReference type="ChEBI" id="CHEBI:60344"/>
    </ligand>
    <ligandPart>
        <name>Fe</name>
        <dbReference type="ChEBI" id="CHEBI:18248"/>
    </ligandPart>
</feature>
<feature type="binding site" description="axial binding residue" evidence="5">
    <location>
        <position position="168"/>
    </location>
    <ligand>
        <name>heme b</name>
        <dbReference type="ChEBI" id="CHEBI:60344"/>
    </ligand>
    <ligandPart>
        <name>Fe</name>
        <dbReference type="ChEBI" id="CHEBI:18248"/>
    </ligandPart>
</feature>
<feature type="binding site" evidence="1">
    <location>
        <begin position="240"/>
        <end position="244"/>
    </location>
    <ligand>
        <name>Mo-molybdopterin</name>
        <dbReference type="ChEBI" id="CHEBI:71302"/>
    </ligand>
</feature>
<feature type="binding site" evidence="1">
    <location>
        <position position="287"/>
    </location>
    <ligand>
        <name>Mo-molybdopterin</name>
        <dbReference type="ChEBI" id="CHEBI:71302"/>
    </ligand>
    <ligandPart>
        <name>Mo</name>
        <dbReference type="ChEBI" id="CHEBI:28685"/>
    </ligandPart>
</feature>
<feature type="binding site" evidence="1">
    <location>
        <position position="344"/>
    </location>
    <ligand>
        <name>Mo-molybdopterin</name>
        <dbReference type="ChEBI" id="CHEBI:71302"/>
    </ligand>
</feature>
<feature type="binding site" evidence="1">
    <location>
        <position position="383"/>
    </location>
    <ligand>
        <name>Mo-molybdopterin</name>
        <dbReference type="ChEBI" id="CHEBI:71302"/>
    </ligand>
</feature>
<feature type="binding site" evidence="1">
    <location>
        <position position="388"/>
    </location>
    <ligand>
        <name>Mo-molybdopterin</name>
        <dbReference type="ChEBI" id="CHEBI:71302"/>
    </ligand>
</feature>
<feature type="binding site" evidence="1">
    <location>
        <begin position="399"/>
        <end position="401"/>
    </location>
    <ligand>
        <name>Mo-molybdopterin</name>
        <dbReference type="ChEBI" id="CHEBI:71302"/>
    </ligand>
</feature>
<protein>
    <recommendedName>
        <fullName evidence="9">Sulfite oxidase, mitochondrial</fullName>
        <ecNumber evidence="7">1.8.3.1</ecNumber>
    </recommendedName>
    <alternativeName>
        <fullName evidence="8">Protein shopper</fullName>
    </alternativeName>
</protein>
<reference key="1">
    <citation type="journal article" date="2000" name="Science">
        <title>The genome sequence of Drosophila melanogaster.</title>
        <authorList>
            <person name="Adams M.D."/>
            <person name="Celniker S.E."/>
            <person name="Holt R.A."/>
            <person name="Evans C.A."/>
            <person name="Gocayne J.D."/>
            <person name="Amanatides P.G."/>
            <person name="Scherer S.E."/>
            <person name="Li P.W."/>
            <person name="Hoskins R.A."/>
            <person name="Galle R.F."/>
            <person name="George R.A."/>
            <person name="Lewis S.E."/>
            <person name="Richards S."/>
            <person name="Ashburner M."/>
            <person name="Henderson S.N."/>
            <person name="Sutton G.G."/>
            <person name="Wortman J.R."/>
            <person name="Yandell M.D."/>
            <person name="Zhang Q."/>
            <person name="Chen L.X."/>
            <person name="Brandon R.C."/>
            <person name="Rogers Y.-H.C."/>
            <person name="Blazej R.G."/>
            <person name="Champe M."/>
            <person name="Pfeiffer B.D."/>
            <person name="Wan K.H."/>
            <person name="Doyle C."/>
            <person name="Baxter E.G."/>
            <person name="Helt G."/>
            <person name="Nelson C.R."/>
            <person name="Miklos G.L.G."/>
            <person name="Abril J.F."/>
            <person name="Agbayani A."/>
            <person name="An H.-J."/>
            <person name="Andrews-Pfannkoch C."/>
            <person name="Baldwin D."/>
            <person name="Ballew R.M."/>
            <person name="Basu A."/>
            <person name="Baxendale J."/>
            <person name="Bayraktaroglu L."/>
            <person name="Beasley E.M."/>
            <person name="Beeson K.Y."/>
            <person name="Benos P.V."/>
            <person name="Berman B.P."/>
            <person name="Bhandari D."/>
            <person name="Bolshakov S."/>
            <person name="Borkova D."/>
            <person name="Botchan M.R."/>
            <person name="Bouck J."/>
            <person name="Brokstein P."/>
            <person name="Brottier P."/>
            <person name="Burtis K.C."/>
            <person name="Busam D.A."/>
            <person name="Butler H."/>
            <person name="Cadieu E."/>
            <person name="Center A."/>
            <person name="Chandra I."/>
            <person name="Cherry J.M."/>
            <person name="Cawley S."/>
            <person name="Dahlke C."/>
            <person name="Davenport L.B."/>
            <person name="Davies P."/>
            <person name="de Pablos B."/>
            <person name="Delcher A."/>
            <person name="Deng Z."/>
            <person name="Mays A.D."/>
            <person name="Dew I."/>
            <person name="Dietz S.M."/>
            <person name="Dodson K."/>
            <person name="Doup L.E."/>
            <person name="Downes M."/>
            <person name="Dugan-Rocha S."/>
            <person name="Dunkov B.C."/>
            <person name="Dunn P."/>
            <person name="Durbin K.J."/>
            <person name="Evangelista C.C."/>
            <person name="Ferraz C."/>
            <person name="Ferriera S."/>
            <person name="Fleischmann W."/>
            <person name="Fosler C."/>
            <person name="Gabrielian A.E."/>
            <person name="Garg N.S."/>
            <person name="Gelbart W.M."/>
            <person name="Glasser K."/>
            <person name="Glodek A."/>
            <person name="Gong F."/>
            <person name="Gorrell J.H."/>
            <person name="Gu Z."/>
            <person name="Guan P."/>
            <person name="Harris M."/>
            <person name="Harris N.L."/>
            <person name="Harvey D.A."/>
            <person name="Heiman T.J."/>
            <person name="Hernandez J.R."/>
            <person name="Houck J."/>
            <person name="Hostin D."/>
            <person name="Houston K.A."/>
            <person name="Howland T.J."/>
            <person name="Wei M.-H."/>
            <person name="Ibegwam C."/>
            <person name="Jalali M."/>
            <person name="Kalush F."/>
            <person name="Karpen G.H."/>
            <person name="Ke Z."/>
            <person name="Kennison J.A."/>
            <person name="Ketchum K.A."/>
            <person name="Kimmel B.E."/>
            <person name="Kodira C.D."/>
            <person name="Kraft C.L."/>
            <person name="Kravitz S."/>
            <person name="Kulp D."/>
            <person name="Lai Z."/>
            <person name="Lasko P."/>
            <person name="Lei Y."/>
            <person name="Levitsky A.A."/>
            <person name="Li J.H."/>
            <person name="Li Z."/>
            <person name="Liang Y."/>
            <person name="Lin X."/>
            <person name="Liu X."/>
            <person name="Mattei B."/>
            <person name="McIntosh T.C."/>
            <person name="McLeod M.P."/>
            <person name="McPherson D."/>
            <person name="Merkulov G."/>
            <person name="Milshina N.V."/>
            <person name="Mobarry C."/>
            <person name="Morris J."/>
            <person name="Moshrefi A."/>
            <person name="Mount S.M."/>
            <person name="Moy M."/>
            <person name="Murphy B."/>
            <person name="Murphy L."/>
            <person name="Muzny D.M."/>
            <person name="Nelson D.L."/>
            <person name="Nelson D.R."/>
            <person name="Nelson K.A."/>
            <person name="Nixon K."/>
            <person name="Nusskern D.R."/>
            <person name="Pacleb J.M."/>
            <person name="Palazzolo M."/>
            <person name="Pittman G.S."/>
            <person name="Pan S."/>
            <person name="Pollard J."/>
            <person name="Puri V."/>
            <person name="Reese M.G."/>
            <person name="Reinert K."/>
            <person name="Remington K."/>
            <person name="Saunders R.D.C."/>
            <person name="Scheeler F."/>
            <person name="Shen H."/>
            <person name="Shue B.C."/>
            <person name="Siden-Kiamos I."/>
            <person name="Simpson M."/>
            <person name="Skupski M.P."/>
            <person name="Smith T.J."/>
            <person name="Spier E."/>
            <person name="Spradling A.C."/>
            <person name="Stapleton M."/>
            <person name="Strong R."/>
            <person name="Sun E."/>
            <person name="Svirskas R."/>
            <person name="Tector C."/>
            <person name="Turner R."/>
            <person name="Venter E."/>
            <person name="Wang A.H."/>
            <person name="Wang X."/>
            <person name="Wang Z.-Y."/>
            <person name="Wassarman D.A."/>
            <person name="Weinstock G.M."/>
            <person name="Weissenbach J."/>
            <person name="Williams S.M."/>
            <person name="Woodage T."/>
            <person name="Worley K.C."/>
            <person name="Wu D."/>
            <person name="Yang S."/>
            <person name="Yao Q.A."/>
            <person name="Ye J."/>
            <person name="Yeh R.-F."/>
            <person name="Zaveri J.S."/>
            <person name="Zhan M."/>
            <person name="Zhang G."/>
            <person name="Zhao Q."/>
            <person name="Zheng L."/>
            <person name="Zheng X.H."/>
            <person name="Zhong F.N."/>
            <person name="Zhong W."/>
            <person name="Zhou X."/>
            <person name="Zhu S.C."/>
            <person name="Zhu X."/>
            <person name="Smith H.O."/>
            <person name="Gibbs R.A."/>
            <person name="Myers E.W."/>
            <person name="Rubin G.M."/>
            <person name="Venter J.C."/>
        </authorList>
    </citation>
    <scope>NUCLEOTIDE SEQUENCE [LARGE SCALE GENOMIC DNA]</scope>
    <source>
        <strain>Berkeley</strain>
    </source>
</reference>
<reference key="2">
    <citation type="journal article" date="2002" name="Genome Biol.">
        <title>Annotation of the Drosophila melanogaster euchromatic genome: a systematic review.</title>
        <authorList>
            <person name="Misra S."/>
            <person name="Crosby M.A."/>
            <person name="Mungall C.J."/>
            <person name="Matthews B.B."/>
            <person name="Campbell K.S."/>
            <person name="Hradecky P."/>
            <person name="Huang Y."/>
            <person name="Kaminker J.S."/>
            <person name="Millburn G.H."/>
            <person name="Prochnik S.E."/>
            <person name="Smith C.D."/>
            <person name="Tupy J.L."/>
            <person name="Whitfield E.J."/>
            <person name="Bayraktaroglu L."/>
            <person name="Berman B.P."/>
            <person name="Bettencourt B.R."/>
            <person name="Celniker S.E."/>
            <person name="de Grey A.D.N.J."/>
            <person name="Drysdale R.A."/>
            <person name="Harris N.L."/>
            <person name="Richter J."/>
            <person name="Russo S."/>
            <person name="Schroeder A.J."/>
            <person name="Shu S.Q."/>
            <person name="Stapleton M."/>
            <person name="Yamada C."/>
            <person name="Ashburner M."/>
            <person name="Gelbart W.M."/>
            <person name="Rubin G.M."/>
            <person name="Lewis S.E."/>
        </authorList>
    </citation>
    <scope>GENOME REANNOTATION</scope>
    <source>
        <strain>Berkeley</strain>
    </source>
</reference>
<reference key="3">
    <citation type="journal article" date="2002" name="Genome Biol.">
        <title>A Drosophila full-length cDNA resource.</title>
        <authorList>
            <person name="Stapleton M."/>
            <person name="Carlson J.W."/>
            <person name="Brokstein P."/>
            <person name="Yu C."/>
            <person name="Champe M."/>
            <person name="George R.A."/>
            <person name="Guarin H."/>
            <person name="Kronmiller B."/>
            <person name="Pacleb J.M."/>
            <person name="Park S."/>
            <person name="Wan K.H."/>
            <person name="Rubin G.M."/>
            <person name="Celniker S.E."/>
        </authorList>
    </citation>
    <scope>NUCLEOTIDE SEQUENCE [LARGE SCALE MRNA]</scope>
    <source>
        <strain>Berkeley</strain>
        <tissue>Embryo</tissue>
    </source>
</reference>
<reference key="4">
    <citation type="journal article" date="2018" name="Nat. Commun.">
        <title>The sulfite oxidase Shopper controls neuronal activity by regulating glutamate homeostasis in Drosophila ensheathing glia.</title>
        <authorList>
            <person name="Otto N."/>
            <person name="Marelja Z."/>
            <person name="Schoofs A."/>
            <person name="Kranenburg H."/>
            <person name="Bittern J."/>
            <person name="Yildirim K."/>
            <person name="Berh D."/>
            <person name="Bethke M."/>
            <person name="Thomas S."/>
            <person name="Rode S."/>
            <person name="Risse B."/>
            <person name="Jiang X."/>
            <person name="Pankratz M."/>
            <person name="Leimkuehler S."/>
            <person name="Klaembt C."/>
        </authorList>
    </citation>
    <scope>FUNCTION</scope>
    <scope>CATALYTIC ACTIVITY</scope>
    <scope>PATHWAY</scope>
    <scope>TISSUE SPECIFICITY</scope>
    <scope>DISRUPTION PHENOTYPE</scope>
</reference>
<sequence>MRLLRPSWAGLLRGRHHQHQRHHRRLLLTTSRGSNGEREEQQHSQWSSPGSRSEQLFYAAFWAGGLTLGYHWLTDKKNHVLLEGQKVASEEELEATARLWHVTNRRELPTYRAEEVEQHNSVEKRIWVTYGLGVYDVTDFVENHPGGDKILMAAGSAIDPFWGIYQQHNTLEVLELLEGFRIGNLEGLVVTNVDDELGSPWSQEPQRHALLKPASKRPFNAEPPIGLLAEQFYTPNELFYVRNHLPVPVINPEDYELEIEGGAKDKTLTLDGIKALPKHSVTAAIMCGGNRRSEMTKVKAVKGLSWGAGAVGNAKWSGARLCDILREQGVQPDETKHVIFEGADLDPTSHPYGASIPLAKALDPRGDVILAYEMNDEPLSRDHGFPIRVIVPGTVGARNVKWLTRIVVADKESDSHWQQNDYKGFSPSTDWDTVDFSKSDAIQAMPVTSAICTPQPGARVKVDDDEGHITVRGYAWSGGGRKIVRVDLTNDEGVSWHVAELEQEEMPDGRHYGWSLWTARLPVSEAQRRAGDVEIWAKAVDSAYNVQPEKFEHIWNLRGVLANAYHKVKVKII</sequence>
<organism>
    <name type="scientific">Drosophila melanogaster</name>
    <name type="common">Fruit fly</name>
    <dbReference type="NCBI Taxonomy" id="7227"/>
    <lineage>
        <taxon>Eukaryota</taxon>
        <taxon>Metazoa</taxon>
        <taxon>Ecdysozoa</taxon>
        <taxon>Arthropoda</taxon>
        <taxon>Hexapoda</taxon>
        <taxon>Insecta</taxon>
        <taxon>Pterygota</taxon>
        <taxon>Neoptera</taxon>
        <taxon>Endopterygota</taxon>
        <taxon>Diptera</taxon>
        <taxon>Brachycera</taxon>
        <taxon>Muscomorpha</taxon>
        <taxon>Ephydroidea</taxon>
        <taxon>Drosophilidae</taxon>
        <taxon>Drosophila</taxon>
        <taxon>Sophophora</taxon>
    </lineage>
</organism>
<dbReference type="EC" id="1.8.3.1" evidence="7"/>
<dbReference type="EMBL" id="AE014298">
    <property type="protein sequence ID" value="AAF48894.1"/>
    <property type="molecule type" value="Genomic_DNA"/>
</dbReference>
<dbReference type="EMBL" id="AY069352">
    <property type="protein sequence ID" value="AAL39497.1"/>
    <property type="molecule type" value="mRNA"/>
</dbReference>
<dbReference type="RefSeq" id="NP_573331.1">
    <property type="nucleotide sequence ID" value="NM_133103.3"/>
</dbReference>
<dbReference type="SMR" id="Q9VWP4"/>
<dbReference type="BioGRID" id="59187">
    <property type="interactions" value="4"/>
</dbReference>
<dbReference type="FunCoup" id="Q9VWP4">
    <property type="interactions" value="1220"/>
</dbReference>
<dbReference type="STRING" id="7227.FBpp0074426"/>
<dbReference type="PaxDb" id="7227-FBpp0074426"/>
<dbReference type="DNASU" id="32878"/>
<dbReference type="EnsemblMetazoa" id="FBtr0074655">
    <property type="protein sequence ID" value="FBpp0074426"/>
    <property type="gene ID" value="FBgn0030966"/>
</dbReference>
<dbReference type="GeneID" id="32878"/>
<dbReference type="KEGG" id="dme:Dmel_CG7280"/>
<dbReference type="UCSC" id="CG7280-RA">
    <property type="organism name" value="d. melanogaster"/>
</dbReference>
<dbReference type="AGR" id="FB:FBgn0030966"/>
<dbReference type="CTD" id="32878"/>
<dbReference type="FlyBase" id="FBgn0030966">
    <property type="gene designation" value="shop"/>
</dbReference>
<dbReference type="VEuPathDB" id="VectorBase:FBgn0030966"/>
<dbReference type="eggNOG" id="KOG0535">
    <property type="taxonomic scope" value="Eukaryota"/>
</dbReference>
<dbReference type="eggNOG" id="KOG4576">
    <property type="taxonomic scope" value="Eukaryota"/>
</dbReference>
<dbReference type="GeneTree" id="ENSGT00390000003749"/>
<dbReference type="HOGENOM" id="CLU_003827_5_1_1"/>
<dbReference type="InParanoid" id="Q9VWP4"/>
<dbReference type="OMA" id="TWHVAEL"/>
<dbReference type="OrthoDB" id="10051395at2759"/>
<dbReference type="PhylomeDB" id="Q9VWP4"/>
<dbReference type="Reactome" id="R-DME-1614517">
    <property type="pathway name" value="Sulfide oxidation to sulfate"/>
</dbReference>
<dbReference type="UniPathway" id="UPA00096"/>
<dbReference type="BioGRID-ORCS" id="32878">
    <property type="hits" value="0 hits in 1 CRISPR screen"/>
</dbReference>
<dbReference type="GenomeRNAi" id="32878"/>
<dbReference type="PRO" id="PR:Q9VWP4"/>
<dbReference type="Proteomes" id="UP000000803">
    <property type="component" value="Chromosome X"/>
</dbReference>
<dbReference type="Bgee" id="FBgn0030966">
    <property type="expression patterns" value="Expressed in adult differentiating enterocyte in digestive tract and 57 other cell types or tissues"/>
</dbReference>
<dbReference type="GO" id="GO:0005758">
    <property type="term" value="C:mitochondrial intermembrane space"/>
    <property type="evidence" value="ECO:0000304"/>
    <property type="project" value="FlyBase"/>
</dbReference>
<dbReference type="GO" id="GO:0005739">
    <property type="term" value="C:mitochondrion"/>
    <property type="evidence" value="ECO:0000314"/>
    <property type="project" value="FlyBase"/>
</dbReference>
<dbReference type="GO" id="GO:0020037">
    <property type="term" value="F:heme binding"/>
    <property type="evidence" value="ECO:0000318"/>
    <property type="project" value="GO_Central"/>
</dbReference>
<dbReference type="GO" id="GO:0030151">
    <property type="term" value="F:molybdenum ion binding"/>
    <property type="evidence" value="ECO:0007669"/>
    <property type="project" value="InterPro"/>
</dbReference>
<dbReference type="GO" id="GO:0043546">
    <property type="term" value="F:molybdopterin cofactor binding"/>
    <property type="evidence" value="ECO:0000318"/>
    <property type="project" value="GO_Central"/>
</dbReference>
<dbReference type="GO" id="GO:0008482">
    <property type="term" value="F:sulfite oxidase activity"/>
    <property type="evidence" value="ECO:0000314"/>
    <property type="project" value="FlyBase"/>
</dbReference>
<dbReference type="GO" id="GO:0030642">
    <property type="term" value="P:intracellular sulfate ion homeostasis"/>
    <property type="evidence" value="ECO:0000315"/>
    <property type="project" value="FlyBase"/>
</dbReference>
<dbReference type="GO" id="GO:0006790">
    <property type="term" value="P:sulfur compound metabolic process"/>
    <property type="evidence" value="ECO:0000318"/>
    <property type="project" value="GO_Central"/>
</dbReference>
<dbReference type="CDD" id="cd02111">
    <property type="entry name" value="eukary_SO_Moco"/>
    <property type="match status" value="1"/>
</dbReference>
<dbReference type="FunFam" id="2.60.40.650:FF:000009">
    <property type="entry name" value="probable sulfite oxidase, mitochondrial"/>
    <property type="match status" value="1"/>
</dbReference>
<dbReference type="FunFam" id="3.10.120.10:FF:000007">
    <property type="entry name" value="Sulfite oxidase, mitochondrial"/>
    <property type="match status" value="1"/>
</dbReference>
<dbReference type="FunFam" id="3.90.420.10:FF:000002">
    <property type="entry name" value="sulfite oxidase, mitochondrial"/>
    <property type="match status" value="1"/>
</dbReference>
<dbReference type="Gene3D" id="2.60.40.650">
    <property type="match status" value="1"/>
</dbReference>
<dbReference type="Gene3D" id="3.10.120.10">
    <property type="entry name" value="Cytochrome b5-like heme/steroid binding domain"/>
    <property type="match status" value="1"/>
</dbReference>
<dbReference type="Gene3D" id="3.90.420.10">
    <property type="entry name" value="Oxidoreductase, molybdopterin-binding domain"/>
    <property type="match status" value="1"/>
</dbReference>
<dbReference type="InterPro" id="IPR001199">
    <property type="entry name" value="Cyt_B5-like_heme/steroid-bd"/>
</dbReference>
<dbReference type="InterPro" id="IPR036400">
    <property type="entry name" value="Cyt_B5-like_heme/steroid_sf"/>
</dbReference>
<dbReference type="InterPro" id="IPR018506">
    <property type="entry name" value="Cyt_B5_heme-BS"/>
</dbReference>
<dbReference type="InterPro" id="IPR014756">
    <property type="entry name" value="Ig_E-set"/>
</dbReference>
<dbReference type="InterPro" id="IPR005066">
    <property type="entry name" value="MoCF_OxRdtse_dimer"/>
</dbReference>
<dbReference type="InterPro" id="IPR008335">
    <property type="entry name" value="Mopterin_OxRdtase_euk"/>
</dbReference>
<dbReference type="InterPro" id="IPR000572">
    <property type="entry name" value="OxRdtase_Mopterin-bd_dom"/>
</dbReference>
<dbReference type="InterPro" id="IPR036374">
    <property type="entry name" value="OxRdtase_Mopterin-bd_sf"/>
</dbReference>
<dbReference type="PANTHER" id="PTHR19372:SF7">
    <property type="entry name" value="SULFITE OXIDASE, MITOCHONDRIAL"/>
    <property type="match status" value="1"/>
</dbReference>
<dbReference type="PANTHER" id="PTHR19372">
    <property type="entry name" value="SULFITE REDUCTASE"/>
    <property type="match status" value="1"/>
</dbReference>
<dbReference type="Pfam" id="PF00173">
    <property type="entry name" value="Cyt-b5"/>
    <property type="match status" value="1"/>
</dbReference>
<dbReference type="Pfam" id="PF03404">
    <property type="entry name" value="Mo-co_dimer"/>
    <property type="match status" value="1"/>
</dbReference>
<dbReference type="Pfam" id="PF00174">
    <property type="entry name" value="Oxidored_molyb"/>
    <property type="match status" value="1"/>
</dbReference>
<dbReference type="PRINTS" id="PR00407">
    <property type="entry name" value="EUMOPTERIN"/>
</dbReference>
<dbReference type="SMART" id="SM01117">
    <property type="entry name" value="Cyt-b5"/>
    <property type="match status" value="1"/>
</dbReference>
<dbReference type="SUPFAM" id="SSF55856">
    <property type="entry name" value="Cytochrome b5-like heme/steroid binding domain"/>
    <property type="match status" value="1"/>
</dbReference>
<dbReference type="SUPFAM" id="SSF81296">
    <property type="entry name" value="E set domains"/>
    <property type="match status" value="1"/>
</dbReference>
<dbReference type="SUPFAM" id="SSF56524">
    <property type="entry name" value="Oxidoreductase molybdopterin-binding domain"/>
    <property type="match status" value="1"/>
</dbReference>
<dbReference type="PROSITE" id="PS00191">
    <property type="entry name" value="CYTOCHROME_B5_1"/>
    <property type="match status" value="1"/>
</dbReference>
<dbReference type="PROSITE" id="PS50255">
    <property type="entry name" value="CYTOCHROME_B5_2"/>
    <property type="match status" value="1"/>
</dbReference>
<keyword id="KW-0349">Heme</keyword>
<keyword id="KW-0408">Iron</keyword>
<keyword id="KW-0479">Metal-binding</keyword>
<keyword id="KW-0496">Mitochondrion</keyword>
<keyword id="KW-0500">Molybdenum</keyword>
<keyword id="KW-0560">Oxidoreductase</keyword>
<keyword id="KW-1185">Reference proteome</keyword>
<keyword id="KW-0809">Transit peptide</keyword>
<name>SUOX_DROME</name>